<comment type="function">
    <text evidence="2">One of the primary rRNA binding proteins. Required for association of the 30S and 50S subunits to form the 70S ribosome, for tRNA binding and peptide bond formation. It has been suggested to have peptidyltransferase activity; this is somewhat controversial. Makes several contacts with the 16S rRNA in the 70S ribosome.</text>
</comment>
<comment type="subunit">
    <text evidence="2">Part of the 50S ribosomal subunit. Forms a bridge to the 30S subunit in the 70S ribosome.</text>
</comment>
<comment type="similarity">
    <text evidence="2">Belongs to the universal ribosomal protein uL2 family.</text>
</comment>
<proteinExistence type="inferred from homology"/>
<reference key="1">
    <citation type="submission" date="1997-09" db="EMBL/GenBank/DDBJ databases">
        <authorList>
            <person name="Itoh T."/>
        </authorList>
    </citation>
    <scope>NUCLEOTIDE SEQUENCE [GENOMIC DNA]</scope>
</reference>
<reference key="2">
    <citation type="journal article" date="2000" name="Proc. Natl. Acad. Sci. U.S.A.">
        <title>Genome sequence of Halobacterium species NRC-1.</title>
        <authorList>
            <person name="Ng W.V."/>
            <person name="Kennedy S.P."/>
            <person name="Mahairas G.G."/>
            <person name="Berquist B."/>
            <person name="Pan M."/>
            <person name="Shukla H.D."/>
            <person name="Lasky S.R."/>
            <person name="Baliga N.S."/>
            <person name="Thorsson V."/>
            <person name="Sbrogna J."/>
            <person name="Swartzell S."/>
            <person name="Weir D."/>
            <person name="Hall J."/>
            <person name="Dahl T.A."/>
            <person name="Welti R."/>
            <person name="Goo Y.A."/>
            <person name="Leithauser B."/>
            <person name="Keller K."/>
            <person name="Cruz R."/>
            <person name="Danson M.J."/>
            <person name="Hough D.W."/>
            <person name="Maddocks D.G."/>
            <person name="Jablonski P.E."/>
            <person name="Krebs M.P."/>
            <person name="Angevine C.M."/>
            <person name="Dale H."/>
            <person name="Isenbarger T.A."/>
            <person name="Peck R.F."/>
            <person name="Pohlschroder M."/>
            <person name="Spudich J.L."/>
            <person name="Jung K.-H."/>
            <person name="Alam M."/>
            <person name="Freitas T."/>
            <person name="Hou S."/>
            <person name="Daniels C.J."/>
            <person name="Dennis P.P."/>
            <person name="Omer A.D."/>
            <person name="Ebhardt H."/>
            <person name="Lowe T.M."/>
            <person name="Liang P."/>
            <person name="Riley M."/>
            <person name="Hood L."/>
            <person name="DasSarma S."/>
        </authorList>
    </citation>
    <scope>NUCLEOTIDE SEQUENCE [LARGE SCALE GENOMIC DNA]</scope>
    <source>
        <strain>ATCC 700922 / JCM 11081 / NRC-1</strain>
    </source>
</reference>
<reference key="3">
    <citation type="journal article" date="1993" name="Biochim. Biophys. Acta">
        <title>Nucleotide sequence of the genes encoding the L3, L4, and L23 equivalent ribosomal proteins from the archaebacterium Halobacterium halobium.</title>
        <authorList>
            <person name="Yuki Y."/>
            <person name="Kanechika R."/>
            <person name="Itoh T."/>
        </authorList>
    </citation>
    <scope>NUCLEOTIDE SEQUENCE [GENOMIC DNA] OF 1-211</scope>
</reference>
<organism>
    <name type="scientific">Halobacterium salinarum (strain ATCC 700922 / JCM 11081 / NRC-1)</name>
    <name type="common">Halobacterium halobium</name>
    <dbReference type="NCBI Taxonomy" id="64091"/>
    <lineage>
        <taxon>Archaea</taxon>
        <taxon>Methanobacteriati</taxon>
        <taxon>Methanobacteriota</taxon>
        <taxon>Stenosarchaea group</taxon>
        <taxon>Halobacteria</taxon>
        <taxon>Halobacteriales</taxon>
        <taxon>Halobacteriaceae</taxon>
        <taxon>Halobacterium</taxon>
        <taxon>Halobacterium salinarum NRC-34001</taxon>
    </lineage>
</organism>
<sequence length="240" mass="25449">MGRRIQGQRRGRGTSTFRAPSHRYKAELSHKRTEDTDVLAGEVIDVEHDPARSAPVARVAFEDDDQRLVLASEGVGVGDTIEIGISATIEEGNTLPLAEIPEGVPVCNVESHPGDGGKFARAGGVNADLVTHERDATIVELPSGETKRLSPDCRATIGVVAGGGRTEKPFVKAGNKHHKMKARGTKWPRVRGVAMNAVDHPFGGGGRQHPGRPKSVSRDAAPGRKVGDIASKRTGRGGNE</sequence>
<name>RL2_HALSA</name>
<evidence type="ECO:0000250" key="1"/>
<evidence type="ECO:0000255" key="2">
    <source>
        <dbReference type="HAMAP-Rule" id="MF_01320"/>
    </source>
</evidence>
<evidence type="ECO:0000256" key="3">
    <source>
        <dbReference type="SAM" id="MobiDB-lite"/>
    </source>
</evidence>
<evidence type="ECO:0000305" key="4"/>
<gene>
    <name evidence="2" type="primary">rpl2</name>
    <name type="ordered locus">VNG_1692G</name>
</gene>
<feature type="initiator methionine" description="Removed" evidence="1">
    <location>
        <position position="1"/>
    </location>
</feature>
<feature type="chain" id="PRO_0000129713" description="Large ribosomal subunit protein uL2">
    <location>
        <begin position="2"/>
        <end position="240"/>
    </location>
</feature>
<feature type="region of interest" description="Disordered" evidence="3">
    <location>
        <begin position="199"/>
        <end position="240"/>
    </location>
</feature>
<feature type="compositionally biased region" description="Basic and acidic residues" evidence="3">
    <location>
        <begin position="221"/>
        <end position="231"/>
    </location>
</feature>
<feature type="sequence conflict" description="In Ref. 1 and 3." evidence="4" ref="1 3">
    <original>SAP</original>
    <variation>TA</variation>
    <location>
        <begin position="53"/>
        <end position="55"/>
    </location>
</feature>
<feature type="sequence conflict" description="In Ref. 1 and 3." evidence="4" ref="1 3">
    <original>GI</original>
    <variation>ES</variation>
    <location>
        <begin position="84"/>
        <end position="85"/>
    </location>
</feature>
<feature type="sequence conflict" description="In Ref. 1 and 3." evidence="4" ref="1 3">
    <original>FARAGG</original>
    <variation>LPRGR</variation>
    <location>
        <begin position="119"/>
        <end position="124"/>
    </location>
</feature>
<feature type="sequence conflict" description="In Ref. 1 and 3." evidence="4" ref="1 3">
    <original>P</original>
    <variation>A</variation>
    <location>
        <position position="142"/>
    </location>
</feature>
<feature type="sequence conflict" description="In Ref. 1 and 3." evidence="4" ref="1 3">
    <original>GGGRQH</original>
    <variation>AVAAR</variation>
    <location>
        <begin position="204"/>
        <end position="209"/>
    </location>
</feature>
<keyword id="KW-1185">Reference proteome</keyword>
<keyword id="KW-0687">Ribonucleoprotein</keyword>
<keyword id="KW-0689">Ribosomal protein</keyword>
<keyword id="KW-0694">RNA-binding</keyword>
<keyword id="KW-0699">rRNA-binding</keyword>
<accession>Q9HPD1</accession>
<accession>Q06843</accession>
<protein>
    <recommendedName>
        <fullName evidence="2">Large ribosomal subunit protein uL2</fullName>
    </recommendedName>
    <alternativeName>
        <fullName evidence="4">50S ribosomal protein L2</fullName>
    </alternativeName>
</protein>
<dbReference type="EMBL" id="AB006961">
    <property type="protein sequence ID" value="BAA22273.1"/>
    <property type="molecule type" value="Genomic_DNA"/>
</dbReference>
<dbReference type="EMBL" id="AE004437">
    <property type="protein sequence ID" value="AAG19939.1"/>
    <property type="molecule type" value="Genomic_DNA"/>
</dbReference>
<dbReference type="PIR" id="G84321">
    <property type="entry name" value="G84321"/>
</dbReference>
<dbReference type="PIR" id="T43819">
    <property type="entry name" value="T43819"/>
</dbReference>
<dbReference type="RefSeq" id="WP_010903237.1">
    <property type="nucleotide sequence ID" value="NC_002607.1"/>
</dbReference>
<dbReference type="SMR" id="Q9HPD1"/>
<dbReference type="FunCoup" id="Q9HPD1">
    <property type="interactions" value="131"/>
</dbReference>
<dbReference type="STRING" id="64091.VNG_1692G"/>
<dbReference type="PaxDb" id="64091-VNG_1692G"/>
<dbReference type="KEGG" id="hal:VNG_1692G"/>
<dbReference type="PATRIC" id="fig|64091.14.peg.1291"/>
<dbReference type="HOGENOM" id="CLU_036235_0_3_2"/>
<dbReference type="InParanoid" id="Q9HPD1"/>
<dbReference type="OrthoDB" id="5987at2157"/>
<dbReference type="PhylomeDB" id="Q9HPD1"/>
<dbReference type="Proteomes" id="UP000000554">
    <property type="component" value="Chromosome"/>
</dbReference>
<dbReference type="GO" id="GO:0022625">
    <property type="term" value="C:cytosolic large ribosomal subunit"/>
    <property type="evidence" value="ECO:0000318"/>
    <property type="project" value="GO_Central"/>
</dbReference>
<dbReference type="GO" id="GO:0003723">
    <property type="term" value="F:RNA binding"/>
    <property type="evidence" value="ECO:0000318"/>
    <property type="project" value="GO_Central"/>
</dbReference>
<dbReference type="GO" id="GO:0019843">
    <property type="term" value="F:rRNA binding"/>
    <property type="evidence" value="ECO:0007669"/>
    <property type="project" value="UniProtKB-UniRule"/>
</dbReference>
<dbReference type="GO" id="GO:0003735">
    <property type="term" value="F:structural constituent of ribosome"/>
    <property type="evidence" value="ECO:0000318"/>
    <property type="project" value="GO_Central"/>
</dbReference>
<dbReference type="GO" id="GO:0002181">
    <property type="term" value="P:cytoplasmic translation"/>
    <property type="evidence" value="ECO:0000318"/>
    <property type="project" value="GO_Central"/>
</dbReference>
<dbReference type="FunFam" id="2.40.50.140:FF:000020">
    <property type="entry name" value="60S ribosomal protein L2"/>
    <property type="match status" value="1"/>
</dbReference>
<dbReference type="FunFam" id="4.10.950.10:FF:000002">
    <property type="entry name" value="60S ribosomal protein L2"/>
    <property type="match status" value="1"/>
</dbReference>
<dbReference type="Gene3D" id="2.30.30.30">
    <property type="match status" value="1"/>
</dbReference>
<dbReference type="Gene3D" id="2.40.50.140">
    <property type="entry name" value="Nucleic acid-binding proteins"/>
    <property type="match status" value="1"/>
</dbReference>
<dbReference type="Gene3D" id="4.10.950.10">
    <property type="entry name" value="Ribosomal protein L2, domain 3"/>
    <property type="match status" value="1"/>
</dbReference>
<dbReference type="HAMAP" id="MF_01320_A">
    <property type="entry name" value="Ribosomal_uL2_A"/>
    <property type="match status" value="1"/>
</dbReference>
<dbReference type="InterPro" id="IPR012340">
    <property type="entry name" value="NA-bd_OB-fold"/>
</dbReference>
<dbReference type="InterPro" id="IPR014722">
    <property type="entry name" value="Rib_uL2_dom2"/>
</dbReference>
<dbReference type="InterPro" id="IPR002171">
    <property type="entry name" value="Ribosomal_uL2"/>
</dbReference>
<dbReference type="InterPro" id="IPR023672">
    <property type="entry name" value="Ribosomal_uL2_arc_euk"/>
</dbReference>
<dbReference type="InterPro" id="IPR022669">
    <property type="entry name" value="Ribosomal_uL2_C"/>
</dbReference>
<dbReference type="InterPro" id="IPR022671">
    <property type="entry name" value="Ribosomal_uL2_CS"/>
</dbReference>
<dbReference type="InterPro" id="IPR014726">
    <property type="entry name" value="Ribosomal_uL2_dom3"/>
</dbReference>
<dbReference type="InterPro" id="IPR022666">
    <property type="entry name" value="Ribosomal_uL2_RNA-bd_dom"/>
</dbReference>
<dbReference type="InterPro" id="IPR008991">
    <property type="entry name" value="Translation_prot_SH3-like_sf"/>
</dbReference>
<dbReference type="NCBIfam" id="NF007180">
    <property type="entry name" value="PRK09612.1"/>
    <property type="match status" value="1"/>
</dbReference>
<dbReference type="PANTHER" id="PTHR13691:SF16">
    <property type="entry name" value="LARGE RIBOSOMAL SUBUNIT PROTEIN UL2"/>
    <property type="match status" value="1"/>
</dbReference>
<dbReference type="PANTHER" id="PTHR13691">
    <property type="entry name" value="RIBOSOMAL PROTEIN L2"/>
    <property type="match status" value="1"/>
</dbReference>
<dbReference type="Pfam" id="PF00181">
    <property type="entry name" value="Ribosomal_L2"/>
    <property type="match status" value="1"/>
</dbReference>
<dbReference type="Pfam" id="PF03947">
    <property type="entry name" value="Ribosomal_L2_C"/>
    <property type="match status" value="1"/>
</dbReference>
<dbReference type="PIRSF" id="PIRSF002158">
    <property type="entry name" value="Ribosomal_L2"/>
    <property type="match status" value="1"/>
</dbReference>
<dbReference type="SMART" id="SM01383">
    <property type="entry name" value="Ribosomal_L2"/>
    <property type="match status" value="1"/>
</dbReference>
<dbReference type="SMART" id="SM01382">
    <property type="entry name" value="Ribosomal_L2_C"/>
    <property type="match status" value="1"/>
</dbReference>
<dbReference type="SUPFAM" id="SSF50249">
    <property type="entry name" value="Nucleic acid-binding proteins"/>
    <property type="match status" value="1"/>
</dbReference>
<dbReference type="SUPFAM" id="SSF50104">
    <property type="entry name" value="Translation proteins SH3-like domain"/>
    <property type="match status" value="1"/>
</dbReference>
<dbReference type="PROSITE" id="PS00467">
    <property type="entry name" value="RIBOSOMAL_L2"/>
    <property type="match status" value="1"/>
</dbReference>